<sequence length="272" mass="31005">MKNTGKRIDLIANRKPQSQRVLYELRDRLKRNQFILNDTNPDIVISIGGDGMLLSAFHKYENQLEKVRFIGLHTGHLGFYTDYRDFELDKLVTNLQLDTGARVSYPVLNVKVFLENGEVKIFRALNEASIRRSDRTMVADIVINGVPFERFRGDGLTVSTPTGSTAYNKSLGGAVLHPTIEALQLTEIASLNNRVYRTLGSSIIVPKKDKIELIPTRNDYHTISVDNSVYSFRNIERIEYQIAHHKIHFVATPSHTSFWNRVKDAFIGEVDE</sequence>
<dbReference type="EC" id="2.7.1.23" evidence="1"/>
<dbReference type="EMBL" id="CP000936">
    <property type="protein sequence ID" value="ACA36304.1"/>
    <property type="molecule type" value="Genomic_DNA"/>
</dbReference>
<dbReference type="RefSeq" id="WP_000799059.1">
    <property type="nucleotide sequence ID" value="NC_010380.1"/>
</dbReference>
<dbReference type="SMR" id="B1IBN7"/>
<dbReference type="KEGG" id="spv:SPH_1189"/>
<dbReference type="HOGENOM" id="CLU_008831_0_3_9"/>
<dbReference type="Proteomes" id="UP000002163">
    <property type="component" value="Chromosome"/>
</dbReference>
<dbReference type="GO" id="GO:0005737">
    <property type="term" value="C:cytoplasm"/>
    <property type="evidence" value="ECO:0007669"/>
    <property type="project" value="UniProtKB-SubCell"/>
</dbReference>
<dbReference type="GO" id="GO:0005524">
    <property type="term" value="F:ATP binding"/>
    <property type="evidence" value="ECO:0007669"/>
    <property type="project" value="UniProtKB-KW"/>
</dbReference>
<dbReference type="GO" id="GO:0046872">
    <property type="term" value="F:metal ion binding"/>
    <property type="evidence" value="ECO:0007669"/>
    <property type="project" value="UniProtKB-UniRule"/>
</dbReference>
<dbReference type="GO" id="GO:0051287">
    <property type="term" value="F:NAD binding"/>
    <property type="evidence" value="ECO:0007669"/>
    <property type="project" value="UniProtKB-ARBA"/>
</dbReference>
<dbReference type="GO" id="GO:0003951">
    <property type="term" value="F:NAD+ kinase activity"/>
    <property type="evidence" value="ECO:0007669"/>
    <property type="project" value="UniProtKB-UniRule"/>
</dbReference>
<dbReference type="GO" id="GO:0019674">
    <property type="term" value="P:NAD metabolic process"/>
    <property type="evidence" value="ECO:0007669"/>
    <property type="project" value="InterPro"/>
</dbReference>
<dbReference type="GO" id="GO:0006741">
    <property type="term" value="P:NADP biosynthetic process"/>
    <property type="evidence" value="ECO:0007669"/>
    <property type="project" value="UniProtKB-UniRule"/>
</dbReference>
<dbReference type="FunFam" id="2.60.200.30:FF:000002">
    <property type="entry name" value="NAD kinase"/>
    <property type="match status" value="1"/>
</dbReference>
<dbReference type="Gene3D" id="3.40.50.10330">
    <property type="entry name" value="Probable inorganic polyphosphate/atp-NAD kinase, domain 1"/>
    <property type="match status" value="1"/>
</dbReference>
<dbReference type="Gene3D" id="2.60.200.30">
    <property type="entry name" value="Probable inorganic polyphosphate/atp-NAD kinase, domain 2"/>
    <property type="match status" value="1"/>
</dbReference>
<dbReference type="HAMAP" id="MF_00361">
    <property type="entry name" value="NAD_kinase"/>
    <property type="match status" value="1"/>
</dbReference>
<dbReference type="InterPro" id="IPR017438">
    <property type="entry name" value="ATP-NAD_kinase_N"/>
</dbReference>
<dbReference type="InterPro" id="IPR017437">
    <property type="entry name" value="ATP-NAD_kinase_PpnK-typ_C"/>
</dbReference>
<dbReference type="InterPro" id="IPR016064">
    <property type="entry name" value="NAD/diacylglycerol_kinase_sf"/>
</dbReference>
<dbReference type="InterPro" id="IPR002504">
    <property type="entry name" value="NADK"/>
</dbReference>
<dbReference type="NCBIfam" id="NF003424">
    <property type="entry name" value="PRK04885.1"/>
    <property type="match status" value="1"/>
</dbReference>
<dbReference type="PANTHER" id="PTHR20275">
    <property type="entry name" value="NAD KINASE"/>
    <property type="match status" value="1"/>
</dbReference>
<dbReference type="PANTHER" id="PTHR20275:SF0">
    <property type="entry name" value="NAD KINASE"/>
    <property type="match status" value="1"/>
</dbReference>
<dbReference type="Pfam" id="PF20143">
    <property type="entry name" value="NAD_kinase_C"/>
    <property type="match status" value="1"/>
</dbReference>
<dbReference type="SUPFAM" id="SSF111331">
    <property type="entry name" value="NAD kinase/diacylglycerol kinase-like"/>
    <property type="match status" value="1"/>
</dbReference>
<keyword id="KW-0067">ATP-binding</keyword>
<keyword id="KW-0963">Cytoplasm</keyword>
<keyword id="KW-0418">Kinase</keyword>
<keyword id="KW-0520">NAD</keyword>
<keyword id="KW-0521">NADP</keyword>
<keyword id="KW-0547">Nucleotide-binding</keyword>
<keyword id="KW-0808">Transferase</keyword>
<name>NADK_STRPI</name>
<proteinExistence type="inferred from homology"/>
<reference key="1">
    <citation type="journal article" date="2010" name="Genome Biol.">
        <title>Structure and dynamics of the pan-genome of Streptococcus pneumoniae and closely related species.</title>
        <authorList>
            <person name="Donati C."/>
            <person name="Hiller N.L."/>
            <person name="Tettelin H."/>
            <person name="Muzzi A."/>
            <person name="Croucher N.J."/>
            <person name="Angiuoli S.V."/>
            <person name="Oggioni M."/>
            <person name="Dunning Hotopp J.C."/>
            <person name="Hu F.Z."/>
            <person name="Riley D.R."/>
            <person name="Covacci A."/>
            <person name="Mitchell T.J."/>
            <person name="Bentley S.D."/>
            <person name="Kilian M."/>
            <person name="Ehrlich G.D."/>
            <person name="Rappuoli R."/>
            <person name="Moxon E.R."/>
            <person name="Masignani V."/>
        </authorList>
    </citation>
    <scope>NUCLEOTIDE SEQUENCE [LARGE SCALE GENOMIC DNA]</scope>
    <source>
        <strain>Hungary19A-6</strain>
    </source>
</reference>
<organism>
    <name type="scientific">Streptococcus pneumoniae (strain Hungary19A-6)</name>
    <dbReference type="NCBI Taxonomy" id="487214"/>
    <lineage>
        <taxon>Bacteria</taxon>
        <taxon>Bacillati</taxon>
        <taxon>Bacillota</taxon>
        <taxon>Bacilli</taxon>
        <taxon>Lactobacillales</taxon>
        <taxon>Streptococcaceae</taxon>
        <taxon>Streptococcus</taxon>
    </lineage>
</organism>
<evidence type="ECO:0000255" key="1">
    <source>
        <dbReference type="HAMAP-Rule" id="MF_00361"/>
    </source>
</evidence>
<accession>B1IBN7</accession>
<protein>
    <recommendedName>
        <fullName evidence="1">NAD kinase</fullName>
        <ecNumber evidence="1">2.7.1.23</ecNumber>
    </recommendedName>
    <alternativeName>
        <fullName evidence="1">ATP-dependent NAD kinase</fullName>
    </alternativeName>
</protein>
<comment type="function">
    <text evidence="1">Involved in the regulation of the intracellular balance of NAD and NADP, and is a key enzyme in the biosynthesis of NADP. Catalyzes specifically the phosphorylation on 2'-hydroxyl of the adenosine moiety of NAD to yield NADP.</text>
</comment>
<comment type="catalytic activity">
    <reaction evidence="1">
        <text>NAD(+) + ATP = ADP + NADP(+) + H(+)</text>
        <dbReference type="Rhea" id="RHEA:18629"/>
        <dbReference type="ChEBI" id="CHEBI:15378"/>
        <dbReference type="ChEBI" id="CHEBI:30616"/>
        <dbReference type="ChEBI" id="CHEBI:57540"/>
        <dbReference type="ChEBI" id="CHEBI:58349"/>
        <dbReference type="ChEBI" id="CHEBI:456216"/>
        <dbReference type="EC" id="2.7.1.23"/>
    </reaction>
</comment>
<comment type="cofactor">
    <cofactor evidence="1">
        <name>a divalent metal cation</name>
        <dbReference type="ChEBI" id="CHEBI:60240"/>
    </cofactor>
</comment>
<comment type="subcellular location">
    <subcellularLocation>
        <location evidence="1">Cytoplasm</location>
    </subcellularLocation>
</comment>
<comment type="similarity">
    <text evidence="1">Belongs to the NAD kinase family.</text>
</comment>
<feature type="chain" id="PRO_1000120891" description="NAD kinase">
    <location>
        <begin position="1"/>
        <end position="272"/>
    </location>
</feature>
<feature type="active site" description="Proton acceptor" evidence="1">
    <location>
        <position position="50"/>
    </location>
</feature>
<feature type="binding site" evidence="1">
    <location>
        <begin position="50"/>
        <end position="51"/>
    </location>
    <ligand>
        <name>NAD(+)</name>
        <dbReference type="ChEBI" id="CHEBI:57540"/>
    </ligand>
</feature>
<feature type="binding site" evidence="1">
    <location>
        <begin position="126"/>
        <end position="127"/>
    </location>
    <ligand>
        <name>NAD(+)</name>
        <dbReference type="ChEBI" id="CHEBI:57540"/>
    </ligand>
</feature>
<feature type="binding site" evidence="1">
    <location>
        <position position="152"/>
    </location>
    <ligand>
        <name>NAD(+)</name>
        <dbReference type="ChEBI" id="CHEBI:57540"/>
    </ligand>
</feature>
<feature type="binding site" evidence="1">
    <location>
        <position position="154"/>
    </location>
    <ligand>
        <name>NAD(+)</name>
        <dbReference type="ChEBI" id="CHEBI:57540"/>
    </ligand>
</feature>
<feature type="binding site" evidence="1">
    <location>
        <begin position="165"/>
        <end position="170"/>
    </location>
    <ligand>
        <name>NAD(+)</name>
        <dbReference type="ChEBI" id="CHEBI:57540"/>
    </ligand>
</feature>
<feature type="binding site" evidence="1">
    <location>
        <position position="189"/>
    </location>
    <ligand>
        <name>NAD(+)</name>
        <dbReference type="ChEBI" id="CHEBI:57540"/>
    </ligand>
</feature>
<gene>
    <name evidence="1" type="primary">nadK</name>
    <name type="ordered locus">SPH_1189</name>
</gene>